<name>YCF3_AGRST</name>
<dbReference type="EMBL" id="EF115543">
    <property type="protein sequence ID" value="ABK79581.1"/>
    <property type="molecule type" value="Genomic_DNA"/>
</dbReference>
<dbReference type="RefSeq" id="YP_874737.1">
    <property type="nucleotide sequence ID" value="NC_008591.1"/>
</dbReference>
<dbReference type="SMR" id="A1EA09"/>
<dbReference type="GeneID" id="4524933"/>
<dbReference type="GO" id="GO:0009535">
    <property type="term" value="C:chloroplast thylakoid membrane"/>
    <property type="evidence" value="ECO:0007669"/>
    <property type="project" value="UniProtKB-SubCell"/>
</dbReference>
<dbReference type="GO" id="GO:0015979">
    <property type="term" value="P:photosynthesis"/>
    <property type="evidence" value="ECO:0007669"/>
    <property type="project" value="UniProtKB-UniRule"/>
</dbReference>
<dbReference type="FunFam" id="1.25.40.10:FF:000004">
    <property type="entry name" value="Photosystem I assembly protein Ycf3"/>
    <property type="match status" value="1"/>
</dbReference>
<dbReference type="Gene3D" id="1.25.40.10">
    <property type="entry name" value="Tetratricopeptide repeat domain"/>
    <property type="match status" value="1"/>
</dbReference>
<dbReference type="HAMAP" id="MF_00439">
    <property type="entry name" value="Ycf3"/>
    <property type="match status" value="1"/>
</dbReference>
<dbReference type="InterPro" id="IPR022818">
    <property type="entry name" value="PSI_Ycf3_assembly"/>
</dbReference>
<dbReference type="InterPro" id="IPR011990">
    <property type="entry name" value="TPR-like_helical_dom_sf"/>
</dbReference>
<dbReference type="InterPro" id="IPR019734">
    <property type="entry name" value="TPR_rpt"/>
</dbReference>
<dbReference type="InterPro" id="IPR051685">
    <property type="entry name" value="Ycf3/AcsC/BcsC/TPR_MFPF"/>
</dbReference>
<dbReference type="NCBIfam" id="NF002725">
    <property type="entry name" value="PRK02603.1"/>
    <property type="match status" value="1"/>
</dbReference>
<dbReference type="PANTHER" id="PTHR44943">
    <property type="entry name" value="CELLULOSE SYNTHASE OPERON PROTEIN C"/>
    <property type="match status" value="1"/>
</dbReference>
<dbReference type="PANTHER" id="PTHR44943:SF8">
    <property type="entry name" value="TPR REPEAT-CONTAINING PROTEIN MJ0263"/>
    <property type="match status" value="1"/>
</dbReference>
<dbReference type="Pfam" id="PF00515">
    <property type="entry name" value="TPR_1"/>
    <property type="match status" value="1"/>
</dbReference>
<dbReference type="SMART" id="SM00028">
    <property type="entry name" value="TPR"/>
    <property type="match status" value="3"/>
</dbReference>
<dbReference type="SUPFAM" id="SSF48452">
    <property type="entry name" value="TPR-like"/>
    <property type="match status" value="1"/>
</dbReference>
<dbReference type="PROSITE" id="PS50005">
    <property type="entry name" value="TPR"/>
    <property type="match status" value="3"/>
</dbReference>
<dbReference type="PROSITE" id="PS50293">
    <property type="entry name" value="TPR_REGION"/>
    <property type="match status" value="1"/>
</dbReference>
<geneLocation type="chloroplast"/>
<organism>
    <name type="scientific">Agrostis stolonifera</name>
    <name type="common">Creeping bentgrass</name>
    <dbReference type="NCBI Taxonomy" id="63632"/>
    <lineage>
        <taxon>Eukaryota</taxon>
        <taxon>Viridiplantae</taxon>
        <taxon>Streptophyta</taxon>
        <taxon>Embryophyta</taxon>
        <taxon>Tracheophyta</taxon>
        <taxon>Spermatophyta</taxon>
        <taxon>Magnoliopsida</taxon>
        <taxon>Liliopsida</taxon>
        <taxon>Poales</taxon>
        <taxon>Poaceae</taxon>
        <taxon>BOP clade</taxon>
        <taxon>Pooideae</taxon>
        <taxon>Poodae</taxon>
        <taxon>Poeae</taxon>
        <taxon>Poeae Chloroplast Group 1 (Aveneae type)</taxon>
        <taxon>Agrostidodinae</taxon>
        <taxon>Agrostidinae</taxon>
        <taxon>Agrostis</taxon>
    </lineage>
</organism>
<protein>
    <recommendedName>
        <fullName evidence="1">Photosystem I assembly protein Ycf3</fullName>
    </recommendedName>
</protein>
<proteinExistence type="inferred from homology"/>
<feature type="chain" id="PRO_0000275610" description="Photosystem I assembly protein Ycf3">
    <location>
        <begin position="1"/>
        <end position="170"/>
    </location>
</feature>
<feature type="repeat" description="TPR 1">
    <location>
        <begin position="35"/>
        <end position="68"/>
    </location>
</feature>
<feature type="repeat" description="TPR 2">
    <location>
        <begin position="72"/>
        <end position="105"/>
    </location>
</feature>
<feature type="repeat" description="TPR 3">
    <location>
        <begin position="120"/>
        <end position="153"/>
    </location>
</feature>
<keyword id="KW-0150">Chloroplast</keyword>
<keyword id="KW-0472">Membrane</keyword>
<keyword id="KW-0602">Photosynthesis</keyword>
<keyword id="KW-0934">Plastid</keyword>
<keyword id="KW-0677">Repeat</keyword>
<keyword id="KW-0793">Thylakoid</keyword>
<keyword id="KW-0802">TPR repeat</keyword>
<sequence length="170" mass="19684">MPRSRANGNFIDKTSSIVANILLRIIPTTSGEKKAFTYYRDGMLAQSEGNYAEALQNYYEATRLEIDPYDRSYILYNIGLIHTSNGEHTKALEYYFRALERNPFLPQAFNNMAVICHYRGEQAILQGDSEIAEAWFDQAAEYWKQAIALTPGNYIEAQNWLKITKRFEFE</sequence>
<comment type="function">
    <text evidence="1">Essential for the assembly of the photosystem I (PSI) complex. May act as a chaperone-like factor to guide the assembly of the PSI subunits.</text>
</comment>
<comment type="subcellular location">
    <subcellularLocation>
        <location evidence="1">Plastid</location>
        <location evidence="1">Chloroplast thylakoid membrane</location>
        <topology evidence="1">Peripheral membrane protein</topology>
    </subcellularLocation>
</comment>
<comment type="similarity">
    <text evidence="1">Belongs to the Ycf3 family.</text>
</comment>
<accession>A1EA09</accession>
<gene>
    <name evidence="1" type="primary">ycf3</name>
</gene>
<reference key="1">
    <citation type="journal article" date="2007" name="Theor. Appl. Genet.">
        <title>Complete chloroplast genome sequences of Hordeum vulgare, Sorghum bicolor and Agrostis stolonifera, and comparative analyses with other grass genomes.</title>
        <authorList>
            <person name="Saski C."/>
            <person name="Lee S.-B."/>
            <person name="Fjellheim S."/>
            <person name="Guda C."/>
            <person name="Jansen R.K."/>
            <person name="Luo H."/>
            <person name="Tomkins J."/>
            <person name="Rognli O.A."/>
            <person name="Daniell H."/>
            <person name="Clarke J.L."/>
        </authorList>
    </citation>
    <scope>NUCLEOTIDE SEQUENCE [LARGE SCALE GENOMIC DNA]</scope>
    <source>
        <strain>cv. Penn A-4</strain>
    </source>
</reference>
<evidence type="ECO:0000255" key="1">
    <source>
        <dbReference type="HAMAP-Rule" id="MF_00439"/>
    </source>
</evidence>